<evidence type="ECO:0000255" key="1">
    <source>
        <dbReference type="HAMAP-Rule" id="MF_00494"/>
    </source>
</evidence>
<accession>A6UPV2</accession>
<gene>
    <name evidence="1" type="primary">tal</name>
    <name type="ordered locus">Mevan_0618</name>
</gene>
<comment type="function">
    <text evidence="1">Transaldolase is important for the balance of metabolites in the pentose-phosphate pathway.</text>
</comment>
<comment type="catalytic activity">
    <reaction evidence="1">
        <text>D-sedoheptulose 7-phosphate + D-glyceraldehyde 3-phosphate = D-erythrose 4-phosphate + beta-D-fructose 6-phosphate</text>
        <dbReference type="Rhea" id="RHEA:17053"/>
        <dbReference type="ChEBI" id="CHEBI:16897"/>
        <dbReference type="ChEBI" id="CHEBI:57483"/>
        <dbReference type="ChEBI" id="CHEBI:57634"/>
        <dbReference type="ChEBI" id="CHEBI:59776"/>
        <dbReference type="EC" id="2.2.1.2"/>
    </reaction>
</comment>
<comment type="pathway">
    <text evidence="1">Carbohydrate degradation; pentose phosphate pathway; D-glyceraldehyde 3-phosphate and beta-D-fructose 6-phosphate from D-ribose 5-phosphate and D-xylulose 5-phosphate (non-oxidative stage): step 2/3.</text>
</comment>
<comment type="subcellular location">
    <subcellularLocation>
        <location evidence="1">Cytoplasm</location>
    </subcellularLocation>
</comment>
<comment type="similarity">
    <text evidence="1">Belongs to the transaldolase family. Type 3B subfamily.</text>
</comment>
<name>TAL_METVS</name>
<feature type="chain" id="PRO_1000060473" description="Probable transaldolase">
    <location>
        <begin position="1"/>
        <end position="215"/>
    </location>
</feature>
<feature type="active site" description="Schiff-base intermediate with substrate" evidence="1">
    <location>
        <position position="83"/>
    </location>
</feature>
<keyword id="KW-0963">Cytoplasm</keyword>
<keyword id="KW-0570">Pentose shunt</keyword>
<keyword id="KW-0704">Schiff base</keyword>
<keyword id="KW-0808">Transferase</keyword>
<reference key="1">
    <citation type="submission" date="2007-06" db="EMBL/GenBank/DDBJ databases">
        <title>Complete sequence of Methanococcus vannielii SB.</title>
        <authorList>
            <consortium name="US DOE Joint Genome Institute"/>
            <person name="Copeland A."/>
            <person name="Lucas S."/>
            <person name="Lapidus A."/>
            <person name="Barry K."/>
            <person name="Glavina del Rio T."/>
            <person name="Dalin E."/>
            <person name="Tice H."/>
            <person name="Pitluck S."/>
            <person name="Chain P."/>
            <person name="Malfatti S."/>
            <person name="Shin M."/>
            <person name="Vergez L."/>
            <person name="Schmutz J."/>
            <person name="Larimer F."/>
            <person name="Land M."/>
            <person name="Hauser L."/>
            <person name="Kyrpides N."/>
            <person name="Anderson I."/>
            <person name="Sieprawska-Lupa M."/>
            <person name="Whitman W.B."/>
            <person name="Richardson P."/>
        </authorList>
    </citation>
    <scope>NUCLEOTIDE SEQUENCE [LARGE SCALE GENOMIC DNA]</scope>
    <source>
        <strain>ATCC 35089 / DSM 1224 / JCM 13029 / OCM 148 / SB</strain>
    </source>
</reference>
<dbReference type="EC" id="2.2.1.2" evidence="1"/>
<dbReference type="EMBL" id="CP000742">
    <property type="protein sequence ID" value="ABR54524.1"/>
    <property type="molecule type" value="Genomic_DNA"/>
</dbReference>
<dbReference type="RefSeq" id="WP_011972427.1">
    <property type="nucleotide sequence ID" value="NC_009634.1"/>
</dbReference>
<dbReference type="SMR" id="A6UPV2"/>
<dbReference type="STRING" id="406327.Mevan_0618"/>
<dbReference type="GeneID" id="5325071"/>
<dbReference type="KEGG" id="mvn:Mevan_0618"/>
<dbReference type="eggNOG" id="arCOG05061">
    <property type="taxonomic scope" value="Archaea"/>
</dbReference>
<dbReference type="HOGENOM" id="CLU_079764_0_0_2"/>
<dbReference type="OrthoDB" id="6661at2157"/>
<dbReference type="UniPathway" id="UPA00115">
    <property type="reaction ID" value="UER00414"/>
</dbReference>
<dbReference type="Proteomes" id="UP000001107">
    <property type="component" value="Chromosome"/>
</dbReference>
<dbReference type="GO" id="GO:0005737">
    <property type="term" value="C:cytoplasm"/>
    <property type="evidence" value="ECO:0007669"/>
    <property type="project" value="UniProtKB-SubCell"/>
</dbReference>
<dbReference type="GO" id="GO:0016832">
    <property type="term" value="F:aldehyde-lyase activity"/>
    <property type="evidence" value="ECO:0007669"/>
    <property type="project" value="InterPro"/>
</dbReference>
<dbReference type="GO" id="GO:0004801">
    <property type="term" value="F:transaldolase activity"/>
    <property type="evidence" value="ECO:0007669"/>
    <property type="project" value="UniProtKB-UniRule"/>
</dbReference>
<dbReference type="GO" id="GO:0005975">
    <property type="term" value="P:carbohydrate metabolic process"/>
    <property type="evidence" value="ECO:0007669"/>
    <property type="project" value="InterPro"/>
</dbReference>
<dbReference type="GO" id="GO:0006098">
    <property type="term" value="P:pentose-phosphate shunt"/>
    <property type="evidence" value="ECO:0007669"/>
    <property type="project" value="UniProtKB-UniRule"/>
</dbReference>
<dbReference type="CDD" id="cd00956">
    <property type="entry name" value="Transaldolase_FSA"/>
    <property type="match status" value="1"/>
</dbReference>
<dbReference type="FunFam" id="3.20.20.70:FF:000018">
    <property type="entry name" value="Probable transaldolase"/>
    <property type="match status" value="1"/>
</dbReference>
<dbReference type="Gene3D" id="3.20.20.70">
    <property type="entry name" value="Aldolase class I"/>
    <property type="match status" value="1"/>
</dbReference>
<dbReference type="HAMAP" id="MF_00494">
    <property type="entry name" value="Transaldolase_3b"/>
    <property type="match status" value="1"/>
</dbReference>
<dbReference type="InterPro" id="IPR013785">
    <property type="entry name" value="Aldolase_TIM"/>
</dbReference>
<dbReference type="InterPro" id="IPR001585">
    <property type="entry name" value="TAL/FSA"/>
</dbReference>
<dbReference type="InterPro" id="IPR022999">
    <property type="entry name" value="Transaldolase_3B"/>
</dbReference>
<dbReference type="InterPro" id="IPR004731">
    <property type="entry name" value="Transaldolase_3B/F6P_aldolase"/>
</dbReference>
<dbReference type="InterPro" id="IPR018225">
    <property type="entry name" value="Transaldolase_AS"/>
</dbReference>
<dbReference type="InterPro" id="IPR033919">
    <property type="entry name" value="TSA/FSA_arc/bac"/>
</dbReference>
<dbReference type="NCBIfam" id="TIGR00875">
    <property type="entry name" value="fsa_talC_mipB"/>
    <property type="match status" value="1"/>
</dbReference>
<dbReference type="PANTHER" id="PTHR10683:SF40">
    <property type="entry name" value="FRUCTOSE-6-PHOSPHATE ALDOLASE 1-RELATED"/>
    <property type="match status" value="1"/>
</dbReference>
<dbReference type="PANTHER" id="PTHR10683">
    <property type="entry name" value="TRANSALDOLASE"/>
    <property type="match status" value="1"/>
</dbReference>
<dbReference type="Pfam" id="PF00923">
    <property type="entry name" value="TAL_FSA"/>
    <property type="match status" value="1"/>
</dbReference>
<dbReference type="SUPFAM" id="SSF51569">
    <property type="entry name" value="Aldolase"/>
    <property type="match status" value="1"/>
</dbReference>
<dbReference type="PROSITE" id="PS01054">
    <property type="entry name" value="TRANSALDOLASE_1"/>
    <property type="match status" value="1"/>
</dbReference>
<protein>
    <recommendedName>
        <fullName evidence="1">Probable transaldolase</fullName>
        <ecNumber evidence="1">2.2.1.2</ecNumber>
    </recommendedName>
</protein>
<proteinExistence type="inferred from homology"/>
<organism>
    <name type="scientific">Methanococcus vannielii (strain ATCC 35089 / DSM 1224 / JCM 13029 / OCM 148 / SB)</name>
    <dbReference type="NCBI Taxonomy" id="406327"/>
    <lineage>
        <taxon>Archaea</taxon>
        <taxon>Methanobacteriati</taxon>
        <taxon>Methanobacteriota</taxon>
        <taxon>Methanomada group</taxon>
        <taxon>Methanococci</taxon>
        <taxon>Methanococcales</taxon>
        <taxon>Methanococcaceae</taxon>
        <taxon>Methanococcus</taxon>
    </lineage>
</organism>
<sequence length="215" mass="23460">MKFFLDTANVEKIKEFNALGLVDGVTTNPSLIKKEGRDFYEVIKEICSIVKGPVSAEVIALDAEGMIKEAKELVKIAENVVIKIPMTKEGMKAVNILSKEGIKTNVTLIFSANQALLAAKAGATYVSPFVGRLDDIGQDGLLLISEIMQIFSAYGIETEVIVASVRHPIHVTESAKMGADVATIPFDVLDKLFNHSLTDIGIEKFLADWDAHLKR</sequence>